<comment type="subunit">
    <text evidence="1">Part of the 50S ribosomal subunit. Contacts protein L32.</text>
</comment>
<comment type="similarity">
    <text evidence="1">Belongs to the bacterial ribosomal protein bL17 family.</text>
</comment>
<proteinExistence type="inferred from homology"/>
<gene>
    <name evidence="1" type="primary">rplQ</name>
    <name type="ordered locus">M28_Spy0070</name>
</gene>
<name>RL17_STRPM</name>
<accession>Q48VS2</accession>
<dbReference type="EMBL" id="CP000056">
    <property type="protein sequence ID" value="AAX71184.1"/>
    <property type="molecule type" value="Genomic_DNA"/>
</dbReference>
<dbReference type="RefSeq" id="WP_002986602.1">
    <property type="nucleotide sequence ID" value="NC_007296.2"/>
</dbReference>
<dbReference type="SMR" id="Q48VS2"/>
<dbReference type="GeneID" id="83703931"/>
<dbReference type="KEGG" id="spb:M28_Spy0070"/>
<dbReference type="HOGENOM" id="CLU_074407_2_2_9"/>
<dbReference type="GO" id="GO:0022625">
    <property type="term" value="C:cytosolic large ribosomal subunit"/>
    <property type="evidence" value="ECO:0007669"/>
    <property type="project" value="TreeGrafter"/>
</dbReference>
<dbReference type="GO" id="GO:0003735">
    <property type="term" value="F:structural constituent of ribosome"/>
    <property type="evidence" value="ECO:0007669"/>
    <property type="project" value="InterPro"/>
</dbReference>
<dbReference type="GO" id="GO:0006412">
    <property type="term" value="P:translation"/>
    <property type="evidence" value="ECO:0007669"/>
    <property type="project" value="UniProtKB-UniRule"/>
</dbReference>
<dbReference type="FunFam" id="3.90.1030.10:FF:000002">
    <property type="entry name" value="50S ribosomal protein L17"/>
    <property type="match status" value="1"/>
</dbReference>
<dbReference type="Gene3D" id="3.90.1030.10">
    <property type="entry name" value="Ribosomal protein L17"/>
    <property type="match status" value="1"/>
</dbReference>
<dbReference type="HAMAP" id="MF_01368">
    <property type="entry name" value="Ribosomal_bL17"/>
    <property type="match status" value="1"/>
</dbReference>
<dbReference type="InterPro" id="IPR000456">
    <property type="entry name" value="Ribosomal_bL17"/>
</dbReference>
<dbReference type="InterPro" id="IPR047859">
    <property type="entry name" value="Ribosomal_bL17_CS"/>
</dbReference>
<dbReference type="InterPro" id="IPR036373">
    <property type="entry name" value="Ribosomal_bL17_sf"/>
</dbReference>
<dbReference type="NCBIfam" id="TIGR00059">
    <property type="entry name" value="L17"/>
    <property type="match status" value="1"/>
</dbReference>
<dbReference type="PANTHER" id="PTHR14413:SF16">
    <property type="entry name" value="LARGE RIBOSOMAL SUBUNIT PROTEIN BL17M"/>
    <property type="match status" value="1"/>
</dbReference>
<dbReference type="PANTHER" id="PTHR14413">
    <property type="entry name" value="RIBOSOMAL PROTEIN L17"/>
    <property type="match status" value="1"/>
</dbReference>
<dbReference type="Pfam" id="PF01196">
    <property type="entry name" value="Ribosomal_L17"/>
    <property type="match status" value="1"/>
</dbReference>
<dbReference type="SUPFAM" id="SSF64263">
    <property type="entry name" value="Prokaryotic ribosomal protein L17"/>
    <property type="match status" value="1"/>
</dbReference>
<dbReference type="PROSITE" id="PS01167">
    <property type="entry name" value="RIBOSOMAL_L17"/>
    <property type="match status" value="1"/>
</dbReference>
<protein>
    <recommendedName>
        <fullName evidence="1">Large ribosomal subunit protein bL17</fullName>
    </recommendedName>
    <alternativeName>
        <fullName evidence="2">50S ribosomal protein L17</fullName>
    </alternativeName>
</protein>
<keyword id="KW-0687">Ribonucleoprotein</keyword>
<keyword id="KW-0689">Ribosomal protein</keyword>
<evidence type="ECO:0000255" key="1">
    <source>
        <dbReference type="HAMAP-Rule" id="MF_01368"/>
    </source>
</evidence>
<evidence type="ECO:0000305" key="2"/>
<reference key="1">
    <citation type="journal article" date="2005" name="J. Infect. Dis.">
        <title>Genome sequence of a serotype M28 strain of group A Streptococcus: potential new insights into puerperal sepsis and bacterial disease specificity.</title>
        <authorList>
            <person name="Green N.M."/>
            <person name="Zhang S."/>
            <person name="Porcella S.F."/>
            <person name="Nagiec M.J."/>
            <person name="Barbian K.D."/>
            <person name="Beres S.B."/>
            <person name="Lefebvre R.B."/>
            <person name="Musser J.M."/>
        </authorList>
    </citation>
    <scope>NUCLEOTIDE SEQUENCE [LARGE SCALE GENOMIC DNA]</scope>
    <source>
        <strain>MGAS6180</strain>
    </source>
</reference>
<sequence length="128" mass="14522">MAYRKLGRTSSQRKAMLRDLTTDLLINESIVTTEARAKEIRKTVEKMITLGKRGDLHARRQAAAYVRNEIASENYDEATDKYTSTTALQKLFSEIAPRYAERNGGYTRILKTEPRRGDAAPMAIIELV</sequence>
<feature type="chain" id="PRO_1000055966" description="Large ribosomal subunit protein bL17">
    <location>
        <begin position="1"/>
        <end position="128"/>
    </location>
</feature>
<organism>
    <name type="scientific">Streptococcus pyogenes serotype M28 (strain MGAS6180)</name>
    <dbReference type="NCBI Taxonomy" id="319701"/>
    <lineage>
        <taxon>Bacteria</taxon>
        <taxon>Bacillati</taxon>
        <taxon>Bacillota</taxon>
        <taxon>Bacilli</taxon>
        <taxon>Lactobacillales</taxon>
        <taxon>Streptococcaceae</taxon>
        <taxon>Streptococcus</taxon>
    </lineage>
</organism>